<reference key="1">
    <citation type="journal article" date="2008" name="BMC Genomics">
        <title>Genome sequence and rapid evolution of the rice pathogen Xanthomonas oryzae pv. oryzae PXO99A.</title>
        <authorList>
            <person name="Salzberg S.L."/>
            <person name="Sommer D.D."/>
            <person name="Schatz M.C."/>
            <person name="Phillippy A.M."/>
            <person name="Rabinowicz P.D."/>
            <person name="Tsuge S."/>
            <person name="Furutani A."/>
            <person name="Ochiai H."/>
            <person name="Delcher A.L."/>
            <person name="Kelley D."/>
            <person name="Madupu R."/>
            <person name="Puiu D."/>
            <person name="Radune D."/>
            <person name="Shumway M."/>
            <person name="Trapnell C."/>
            <person name="Aparna G."/>
            <person name="Jha G."/>
            <person name="Pandey A."/>
            <person name="Patil P.B."/>
            <person name="Ishihara H."/>
            <person name="Meyer D.F."/>
            <person name="Szurek B."/>
            <person name="Verdier V."/>
            <person name="Koebnik R."/>
            <person name="Dow J.M."/>
            <person name="Ryan R.P."/>
            <person name="Hirata H."/>
            <person name="Tsuyumu S."/>
            <person name="Won Lee S."/>
            <person name="Seo Y.-S."/>
            <person name="Sriariyanum M."/>
            <person name="Ronald P.C."/>
            <person name="Sonti R.V."/>
            <person name="Van Sluys M.-A."/>
            <person name="Leach J.E."/>
            <person name="White F.F."/>
            <person name="Bogdanove A.J."/>
        </authorList>
    </citation>
    <scope>NUCLEOTIDE SEQUENCE [LARGE SCALE GENOMIC DNA]</scope>
    <source>
        <strain>PXO99A</strain>
    </source>
</reference>
<protein>
    <recommendedName>
        <fullName evidence="1">Protein GrpE</fullName>
    </recommendedName>
    <alternativeName>
        <fullName evidence="1">HSP-70 cofactor</fullName>
    </alternativeName>
</protein>
<feature type="chain" id="PRO_1000137642" description="Protein GrpE">
    <location>
        <begin position="1"/>
        <end position="172"/>
    </location>
</feature>
<feature type="region of interest" description="Disordered" evidence="2">
    <location>
        <begin position="1"/>
        <end position="24"/>
    </location>
</feature>
<sequence length="172" mass="18926">MNQDHPEFDSEDLAQNPPETDPLKAEIESLRSEIALVKADALRERADLENQRKRIARDVENARKFANEKLLGELLPVFDSLDAGLTAAGTQPSPLRDGLDMTYKQLLKVAADNGLTLLDPVGQPFNPDQHQAISQGEAEGIAPGHVVQVFQKGYLLNDRLLRPALVVVAKQD</sequence>
<keyword id="KW-0143">Chaperone</keyword>
<keyword id="KW-0963">Cytoplasm</keyword>
<keyword id="KW-0346">Stress response</keyword>
<proteinExistence type="inferred from homology"/>
<evidence type="ECO:0000255" key="1">
    <source>
        <dbReference type="HAMAP-Rule" id="MF_01151"/>
    </source>
</evidence>
<evidence type="ECO:0000256" key="2">
    <source>
        <dbReference type="SAM" id="MobiDB-lite"/>
    </source>
</evidence>
<organism>
    <name type="scientific">Xanthomonas oryzae pv. oryzae (strain PXO99A)</name>
    <dbReference type="NCBI Taxonomy" id="360094"/>
    <lineage>
        <taxon>Bacteria</taxon>
        <taxon>Pseudomonadati</taxon>
        <taxon>Pseudomonadota</taxon>
        <taxon>Gammaproteobacteria</taxon>
        <taxon>Lysobacterales</taxon>
        <taxon>Lysobacteraceae</taxon>
        <taxon>Xanthomonas</taxon>
    </lineage>
</organism>
<gene>
    <name evidence="1" type="primary">grpE</name>
    <name type="ordered locus">PXO_01184</name>
</gene>
<comment type="function">
    <text evidence="1">Participates actively in the response to hyperosmotic and heat shock by preventing the aggregation of stress-denatured proteins, in association with DnaK and GrpE. It is the nucleotide exchange factor for DnaK and may function as a thermosensor. Unfolded proteins bind initially to DnaJ; upon interaction with the DnaJ-bound protein, DnaK hydrolyzes its bound ATP, resulting in the formation of a stable complex. GrpE releases ADP from DnaK; ATP binding to DnaK triggers the release of the substrate protein, thus completing the reaction cycle. Several rounds of ATP-dependent interactions between DnaJ, DnaK and GrpE are required for fully efficient folding.</text>
</comment>
<comment type="subunit">
    <text evidence="1">Homodimer.</text>
</comment>
<comment type="subcellular location">
    <subcellularLocation>
        <location evidence="1">Cytoplasm</location>
    </subcellularLocation>
</comment>
<comment type="similarity">
    <text evidence="1">Belongs to the GrpE family.</text>
</comment>
<name>GRPE_XANOP</name>
<dbReference type="EMBL" id="CP000967">
    <property type="protein sequence ID" value="ACD59506.1"/>
    <property type="molecule type" value="Genomic_DNA"/>
</dbReference>
<dbReference type="RefSeq" id="WP_011258741.1">
    <property type="nucleotide sequence ID" value="NC_010717.2"/>
</dbReference>
<dbReference type="SMR" id="B2SQU5"/>
<dbReference type="GeneID" id="77338115"/>
<dbReference type="KEGG" id="xop:PXO_01184"/>
<dbReference type="eggNOG" id="COG0576">
    <property type="taxonomic scope" value="Bacteria"/>
</dbReference>
<dbReference type="HOGENOM" id="CLU_057217_6_0_6"/>
<dbReference type="Proteomes" id="UP000001740">
    <property type="component" value="Chromosome"/>
</dbReference>
<dbReference type="GO" id="GO:0005829">
    <property type="term" value="C:cytosol"/>
    <property type="evidence" value="ECO:0007669"/>
    <property type="project" value="TreeGrafter"/>
</dbReference>
<dbReference type="GO" id="GO:0000774">
    <property type="term" value="F:adenyl-nucleotide exchange factor activity"/>
    <property type="evidence" value="ECO:0007669"/>
    <property type="project" value="InterPro"/>
</dbReference>
<dbReference type="GO" id="GO:0042803">
    <property type="term" value="F:protein homodimerization activity"/>
    <property type="evidence" value="ECO:0007669"/>
    <property type="project" value="InterPro"/>
</dbReference>
<dbReference type="GO" id="GO:0051087">
    <property type="term" value="F:protein-folding chaperone binding"/>
    <property type="evidence" value="ECO:0007669"/>
    <property type="project" value="InterPro"/>
</dbReference>
<dbReference type="GO" id="GO:0051082">
    <property type="term" value="F:unfolded protein binding"/>
    <property type="evidence" value="ECO:0007669"/>
    <property type="project" value="TreeGrafter"/>
</dbReference>
<dbReference type="GO" id="GO:0006457">
    <property type="term" value="P:protein folding"/>
    <property type="evidence" value="ECO:0007669"/>
    <property type="project" value="InterPro"/>
</dbReference>
<dbReference type="CDD" id="cd00446">
    <property type="entry name" value="GrpE"/>
    <property type="match status" value="1"/>
</dbReference>
<dbReference type="FunFam" id="2.30.22.10:FF:000001">
    <property type="entry name" value="Protein GrpE"/>
    <property type="match status" value="1"/>
</dbReference>
<dbReference type="Gene3D" id="3.90.20.20">
    <property type="match status" value="1"/>
</dbReference>
<dbReference type="Gene3D" id="2.30.22.10">
    <property type="entry name" value="Head domain of nucleotide exchange factor GrpE"/>
    <property type="match status" value="1"/>
</dbReference>
<dbReference type="HAMAP" id="MF_01151">
    <property type="entry name" value="GrpE"/>
    <property type="match status" value="1"/>
</dbReference>
<dbReference type="InterPro" id="IPR000740">
    <property type="entry name" value="GrpE"/>
</dbReference>
<dbReference type="InterPro" id="IPR013805">
    <property type="entry name" value="GrpE_coiled_coil"/>
</dbReference>
<dbReference type="InterPro" id="IPR009012">
    <property type="entry name" value="GrpE_head"/>
</dbReference>
<dbReference type="NCBIfam" id="NF010738">
    <property type="entry name" value="PRK14140.1"/>
    <property type="match status" value="1"/>
</dbReference>
<dbReference type="NCBIfam" id="NF010745">
    <property type="entry name" value="PRK14147.1"/>
    <property type="match status" value="1"/>
</dbReference>
<dbReference type="PANTHER" id="PTHR21237">
    <property type="entry name" value="GRPE PROTEIN"/>
    <property type="match status" value="1"/>
</dbReference>
<dbReference type="PANTHER" id="PTHR21237:SF23">
    <property type="entry name" value="GRPE PROTEIN HOMOLOG, MITOCHONDRIAL"/>
    <property type="match status" value="1"/>
</dbReference>
<dbReference type="Pfam" id="PF01025">
    <property type="entry name" value="GrpE"/>
    <property type="match status" value="1"/>
</dbReference>
<dbReference type="PRINTS" id="PR00773">
    <property type="entry name" value="GRPEPROTEIN"/>
</dbReference>
<dbReference type="SUPFAM" id="SSF58014">
    <property type="entry name" value="Coiled-coil domain of nucleotide exchange factor GrpE"/>
    <property type="match status" value="1"/>
</dbReference>
<dbReference type="SUPFAM" id="SSF51064">
    <property type="entry name" value="Head domain of nucleotide exchange factor GrpE"/>
    <property type="match status" value="1"/>
</dbReference>
<dbReference type="PROSITE" id="PS01071">
    <property type="entry name" value="GRPE"/>
    <property type="match status" value="1"/>
</dbReference>
<accession>B2SQU5</accession>